<reference key="1">
    <citation type="journal article" date="2008" name="J. Bacteriol.">
        <title>The pangenome structure of Escherichia coli: comparative genomic analysis of E. coli commensal and pathogenic isolates.</title>
        <authorList>
            <person name="Rasko D.A."/>
            <person name="Rosovitz M.J."/>
            <person name="Myers G.S.A."/>
            <person name="Mongodin E.F."/>
            <person name="Fricke W.F."/>
            <person name="Gajer P."/>
            <person name="Crabtree J."/>
            <person name="Sebaihia M."/>
            <person name="Thomson N.R."/>
            <person name="Chaudhuri R."/>
            <person name="Henderson I.R."/>
            <person name="Sperandio V."/>
            <person name="Ravel J."/>
        </authorList>
    </citation>
    <scope>NUCLEOTIDE SEQUENCE [LARGE SCALE GENOMIC DNA]</scope>
    <source>
        <strain>HS</strain>
    </source>
</reference>
<keyword id="KW-0963">Cytoplasm</keyword>
<keyword id="KW-0275">Fatty acid biosynthesis</keyword>
<keyword id="KW-0276">Fatty acid metabolism</keyword>
<keyword id="KW-0444">Lipid biosynthesis</keyword>
<keyword id="KW-0443">Lipid metabolism</keyword>
<keyword id="KW-0460">Magnesium</keyword>
<keyword id="KW-0479">Metal-binding</keyword>
<keyword id="KW-0808">Transferase</keyword>
<feature type="chain" id="PRO_1000057669" description="Holo-[acyl-carrier-protein] synthase">
    <location>
        <begin position="1"/>
        <end position="126"/>
    </location>
</feature>
<feature type="binding site" evidence="1">
    <location>
        <position position="9"/>
    </location>
    <ligand>
        <name>Mg(2+)</name>
        <dbReference type="ChEBI" id="CHEBI:18420"/>
    </ligand>
</feature>
<feature type="binding site" evidence="1">
    <location>
        <position position="58"/>
    </location>
    <ligand>
        <name>Mg(2+)</name>
        <dbReference type="ChEBI" id="CHEBI:18420"/>
    </ligand>
</feature>
<protein>
    <recommendedName>
        <fullName evidence="1">Holo-[acyl-carrier-protein] synthase</fullName>
        <shortName evidence="1">Holo-ACP synthase</shortName>
        <ecNumber evidence="1">2.7.8.7</ecNumber>
    </recommendedName>
    <alternativeName>
        <fullName evidence="1">4'-phosphopantetheinyl transferase AcpS</fullName>
    </alternativeName>
</protein>
<dbReference type="EC" id="2.7.8.7" evidence="1"/>
<dbReference type="EMBL" id="CP000802">
    <property type="protein sequence ID" value="ABV06977.1"/>
    <property type="molecule type" value="Genomic_DNA"/>
</dbReference>
<dbReference type="RefSeq" id="WP_000986037.1">
    <property type="nucleotide sequence ID" value="NC_009800.1"/>
</dbReference>
<dbReference type="SMR" id="A8A373"/>
<dbReference type="GeneID" id="75172677"/>
<dbReference type="KEGG" id="ecx:EcHS_A2718"/>
<dbReference type="HOGENOM" id="CLU_089696_3_1_6"/>
<dbReference type="GO" id="GO:0005737">
    <property type="term" value="C:cytoplasm"/>
    <property type="evidence" value="ECO:0007669"/>
    <property type="project" value="UniProtKB-SubCell"/>
</dbReference>
<dbReference type="GO" id="GO:0008897">
    <property type="term" value="F:holo-[acyl-carrier-protein] synthase activity"/>
    <property type="evidence" value="ECO:0007669"/>
    <property type="project" value="UniProtKB-UniRule"/>
</dbReference>
<dbReference type="GO" id="GO:0000287">
    <property type="term" value="F:magnesium ion binding"/>
    <property type="evidence" value="ECO:0007669"/>
    <property type="project" value="UniProtKB-UniRule"/>
</dbReference>
<dbReference type="GO" id="GO:0006633">
    <property type="term" value="P:fatty acid biosynthetic process"/>
    <property type="evidence" value="ECO:0007669"/>
    <property type="project" value="UniProtKB-UniRule"/>
</dbReference>
<dbReference type="FunFam" id="3.90.470.20:FF:000001">
    <property type="entry name" value="Holo-[acyl-carrier-protein] synthase"/>
    <property type="match status" value="1"/>
</dbReference>
<dbReference type="Gene3D" id="3.90.470.20">
    <property type="entry name" value="4'-phosphopantetheinyl transferase domain"/>
    <property type="match status" value="1"/>
</dbReference>
<dbReference type="HAMAP" id="MF_00101">
    <property type="entry name" value="AcpS"/>
    <property type="match status" value="1"/>
</dbReference>
<dbReference type="InterPro" id="IPR008278">
    <property type="entry name" value="4-PPantetheinyl_Trfase_dom"/>
</dbReference>
<dbReference type="InterPro" id="IPR037143">
    <property type="entry name" value="4-PPantetheinyl_Trfase_dom_sf"/>
</dbReference>
<dbReference type="InterPro" id="IPR002582">
    <property type="entry name" value="ACPS"/>
</dbReference>
<dbReference type="InterPro" id="IPR004568">
    <property type="entry name" value="Ppantetheine-prot_Trfase_dom"/>
</dbReference>
<dbReference type="NCBIfam" id="TIGR00516">
    <property type="entry name" value="acpS"/>
    <property type="match status" value="1"/>
</dbReference>
<dbReference type="NCBIfam" id="TIGR00556">
    <property type="entry name" value="pantethn_trn"/>
    <property type="match status" value="1"/>
</dbReference>
<dbReference type="Pfam" id="PF01648">
    <property type="entry name" value="ACPS"/>
    <property type="match status" value="1"/>
</dbReference>
<dbReference type="SUPFAM" id="SSF56214">
    <property type="entry name" value="4'-phosphopantetheinyl transferase"/>
    <property type="match status" value="1"/>
</dbReference>
<proteinExistence type="inferred from homology"/>
<name>ACPS_ECOHS</name>
<comment type="function">
    <text evidence="1">Transfers the 4'-phosphopantetheine moiety from coenzyme A to a Ser of acyl-carrier-protein.</text>
</comment>
<comment type="catalytic activity">
    <reaction evidence="1">
        <text>apo-[ACP] + CoA = holo-[ACP] + adenosine 3',5'-bisphosphate + H(+)</text>
        <dbReference type="Rhea" id="RHEA:12068"/>
        <dbReference type="Rhea" id="RHEA-COMP:9685"/>
        <dbReference type="Rhea" id="RHEA-COMP:9690"/>
        <dbReference type="ChEBI" id="CHEBI:15378"/>
        <dbReference type="ChEBI" id="CHEBI:29999"/>
        <dbReference type="ChEBI" id="CHEBI:57287"/>
        <dbReference type="ChEBI" id="CHEBI:58343"/>
        <dbReference type="ChEBI" id="CHEBI:64479"/>
        <dbReference type="EC" id="2.7.8.7"/>
    </reaction>
</comment>
<comment type="cofactor">
    <cofactor evidence="1">
        <name>Mg(2+)</name>
        <dbReference type="ChEBI" id="CHEBI:18420"/>
    </cofactor>
</comment>
<comment type="subcellular location">
    <subcellularLocation>
        <location evidence="1">Cytoplasm</location>
    </subcellularLocation>
</comment>
<comment type="similarity">
    <text evidence="1">Belongs to the P-Pant transferase superfamily. AcpS family.</text>
</comment>
<accession>A8A373</accession>
<organism>
    <name type="scientific">Escherichia coli O9:H4 (strain HS)</name>
    <dbReference type="NCBI Taxonomy" id="331112"/>
    <lineage>
        <taxon>Bacteria</taxon>
        <taxon>Pseudomonadati</taxon>
        <taxon>Pseudomonadota</taxon>
        <taxon>Gammaproteobacteria</taxon>
        <taxon>Enterobacterales</taxon>
        <taxon>Enterobacteriaceae</taxon>
        <taxon>Escherichia</taxon>
    </lineage>
</organism>
<evidence type="ECO:0000255" key="1">
    <source>
        <dbReference type="HAMAP-Rule" id="MF_00101"/>
    </source>
</evidence>
<gene>
    <name evidence="1" type="primary">acpS</name>
    <name type="ordered locus">EcHS_A2718</name>
</gene>
<sequence>MAILGLGTDIVEIARIEAVIARSGERLARRVLSDNEWEIWKTHHQPVRFLAKRFAVKEAAAKAFGTGIRNGLAFNQFEVFNDELGKPRLRLWGEALKLAEKLGVANMHVTLADERHYACATVIIES</sequence>